<organism>
    <name type="scientific">Burkholderia pseudomallei (strain 1106a)</name>
    <dbReference type="NCBI Taxonomy" id="357348"/>
    <lineage>
        <taxon>Bacteria</taxon>
        <taxon>Pseudomonadati</taxon>
        <taxon>Pseudomonadota</taxon>
        <taxon>Betaproteobacteria</taxon>
        <taxon>Burkholderiales</taxon>
        <taxon>Burkholderiaceae</taxon>
        <taxon>Burkholderia</taxon>
        <taxon>pseudomallei group</taxon>
    </lineage>
</organism>
<evidence type="ECO:0000255" key="1">
    <source>
        <dbReference type="HAMAP-Rule" id="MF_00154"/>
    </source>
</evidence>
<sequence>MDTTLSHTPGSRLSQYLALTKPRVTQLAVFCAVIGMFLATPGMVPWKVLLGGTIGIGLLAGSAFAINCLVEQKIDAMMRRTAWRPSARGEITTLQILAFSTVLGGLGAWTLYTFTNPLTMWLTIATFVGYAVIYTLLLKPMTPQNIVIGGASGAMPPALGWAAVTGAVPGDAWILVLIIFVWTPPHFWVLALYRRKDYENAGLPMLPVTHGEQFTRLHILLYTVILFAVTMMPFISGMSGAVYLTSAVLLGALFLAYAWKIYRDYSDALARRAFRYSIVYLSLLFAALLVDHYARPVIGM</sequence>
<keyword id="KW-0997">Cell inner membrane</keyword>
<keyword id="KW-1003">Cell membrane</keyword>
<keyword id="KW-0350">Heme biosynthesis</keyword>
<keyword id="KW-0472">Membrane</keyword>
<keyword id="KW-0808">Transferase</keyword>
<keyword id="KW-0812">Transmembrane</keyword>
<keyword id="KW-1133">Transmembrane helix</keyword>
<proteinExistence type="inferred from homology"/>
<comment type="function">
    <text evidence="1">Converts heme B (protoheme IX) to heme O by substitution of the vinyl group on carbon 2 of heme B porphyrin ring with a hydroxyethyl farnesyl side group.</text>
</comment>
<comment type="catalytic activity">
    <reaction evidence="1">
        <text>heme b + (2E,6E)-farnesyl diphosphate + H2O = Fe(II)-heme o + diphosphate</text>
        <dbReference type="Rhea" id="RHEA:28070"/>
        <dbReference type="ChEBI" id="CHEBI:15377"/>
        <dbReference type="ChEBI" id="CHEBI:33019"/>
        <dbReference type="ChEBI" id="CHEBI:60344"/>
        <dbReference type="ChEBI" id="CHEBI:60530"/>
        <dbReference type="ChEBI" id="CHEBI:175763"/>
        <dbReference type="EC" id="2.5.1.141"/>
    </reaction>
</comment>
<comment type="pathway">
    <text evidence="1">Porphyrin-containing compound metabolism; heme O biosynthesis; heme O from protoheme: step 1/1.</text>
</comment>
<comment type="subcellular location">
    <subcellularLocation>
        <location evidence="1">Cell inner membrane</location>
        <topology evidence="1">Multi-pass membrane protein</topology>
    </subcellularLocation>
</comment>
<comment type="miscellaneous">
    <text evidence="1">Carbon 2 of the heme B porphyrin ring is defined according to the Fischer nomenclature.</text>
</comment>
<comment type="similarity">
    <text evidence="1">Belongs to the UbiA prenyltransferase family. Protoheme IX farnesyltransferase subfamily.</text>
</comment>
<accession>A3NR29</accession>
<dbReference type="EC" id="2.5.1.141" evidence="1"/>
<dbReference type="EMBL" id="CP000572">
    <property type="protein sequence ID" value="ABN90877.1"/>
    <property type="molecule type" value="Genomic_DNA"/>
</dbReference>
<dbReference type="SMR" id="A3NR29"/>
<dbReference type="KEGG" id="bpl:BURPS1106A_0517"/>
<dbReference type="HOGENOM" id="CLU_029631_0_2_4"/>
<dbReference type="UniPathway" id="UPA00834">
    <property type="reaction ID" value="UER00712"/>
</dbReference>
<dbReference type="Proteomes" id="UP000006738">
    <property type="component" value="Chromosome I"/>
</dbReference>
<dbReference type="GO" id="GO:0005886">
    <property type="term" value="C:plasma membrane"/>
    <property type="evidence" value="ECO:0007669"/>
    <property type="project" value="UniProtKB-SubCell"/>
</dbReference>
<dbReference type="GO" id="GO:0008495">
    <property type="term" value="F:protoheme IX farnesyltransferase activity"/>
    <property type="evidence" value="ECO:0007669"/>
    <property type="project" value="UniProtKB-UniRule"/>
</dbReference>
<dbReference type="GO" id="GO:0048034">
    <property type="term" value="P:heme O biosynthetic process"/>
    <property type="evidence" value="ECO:0007669"/>
    <property type="project" value="UniProtKB-UniRule"/>
</dbReference>
<dbReference type="CDD" id="cd13957">
    <property type="entry name" value="PT_UbiA_Cox10"/>
    <property type="match status" value="1"/>
</dbReference>
<dbReference type="Gene3D" id="1.10.357.140">
    <property type="entry name" value="UbiA prenyltransferase"/>
    <property type="match status" value="1"/>
</dbReference>
<dbReference type="HAMAP" id="MF_00154">
    <property type="entry name" value="CyoE_CtaB"/>
    <property type="match status" value="1"/>
</dbReference>
<dbReference type="InterPro" id="IPR006369">
    <property type="entry name" value="Protohaem_IX_farnesylTrfase"/>
</dbReference>
<dbReference type="InterPro" id="IPR000537">
    <property type="entry name" value="UbiA_prenyltransferase"/>
</dbReference>
<dbReference type="InterPro" id="IPR030470">
    <property type="entry name" value="UbiA_prenylTrfase_CS"/>
</dbReference>
<dbReference type="InterPro" id="IPR044878">
    <property type="entry name" value="UbiA_sf"/>
</dbReference>
<dbReference type="NCBIfam" id="TIGR01473">
    <property type="entry name" value="cyoE_ctaB"/>
    <property type="match status" value="1"/>
</dbReference>
<dbReference type="NCBIfam" id="NF003349">
    <property type="entry name" value="PRK04375.1-2"/>
    <property type="match status" value="1"/>
</dbReference>
<dbReference type="PANTHER" id="PTHR43448:SF7">
    <property type="entry name" value="4-HYDROXYBENZOATE SOLANESYLTRANSFERASE"/>
    <property type="match status" value="1"/>
</dbReference>
<dbReference type="PANTHER" id="PTHR43448">
    <property type="entry name" value="PROTOHEME IX FARNESYLTRANSFERASE, MITOCHONDRIAL"/>
    <property type="match status" value="1"/>
</dbReference>
<dbReference type="Pfam" id="PF01040">
    <property type="entry name" value="UbiA"/>
    <property type="match status" value="1"/>
</dbReference>
<dbReference type="PROSITE" id="PS00943">
    <property type="entry name" value="UBIA"/>
    <property type="match status" value="1"/>
</dbReference>
<name>COXX_BURP0</name>
<protein>
    <recommendedName>
        <fullName evidence="1">Protoheme IX farnesyltransferase</fullName>
        <ecNumber evidence="1">2.5.1.141</ecNumber>
    </recommendedName>
    <alternativeName>
        <fullName evidence="1">Heme B farnesyltransferase</fullName>
    </alternativeName>
    <alternativeName>
        <fullName evidence="1">Heme O synthase</fullName>
    </alternativeName>
</protein>
<reference key="1">
    <citation type="journal article" date="2010" name="Genome Biol. Evol.">
        <title>Continuing evolution of Burkholderia mallei through genome reduction and large-scale rearrangements.</title>
        <authorList>
            <person name="Losada L."/>
            <person name="Ronning C.M."/>
            <person name="DeShazer D."/>
            <person name="Woods D."/>
            <person name="Fedorova N."/>
            <person name="Kim H.S."/>
            <person name="Shabalina S.A."/>
            <person name="Pearson T.R."/>
            <person name="Brinkac L."/>
            <person name="Tan P."/>
            <person name="Nandi T."/>
            <person name="Crabtree J."/>
            <person name="Badger J."/>
            <person name="Beckstrom-Sternberg S."/>
            <person name="Saqib M."/>
            <person name="Schutzer S.E."/>
            <person name="Keim P."/>
            <person name="Nierman W.C."/>
        </authorList>
    </citation>
    <scope>NUCLEOTIDE SEQUENCE [LARGE SCALE GENOMIC DNA]</scope>
    <source>
        <strain>1106a</strain>
    </source>
</reference>
<gene>
    <name evidence="1" type="primary">ctaB</name>
    <name type="ordered locus">BURPS1106A_0517</name>
</gene>
<feature type="chain" id="PRO_0000327029" description="Protoheme IX farnesyltransferase">
    <location>
        <begin position="1"/>
        <end position="300"/>
    </location>
</feature>
<feature type="transmembrane region" description="Helical" evidence="1">
    <location>
        <begin position="24"/>
        <end position="44"/>
    </location>
</feature>
<feature type="transmembrane region" description="Helical" evidence="1">
    <location>
        <begin position="48"/>
        <end position="68"/>
    </location>
</feature>
<feature type="transmembrane region" description="Helical" evidence="1">
    <location>
        <begin position="94"/>
        <end position="114"/>
    </location>
</feature>
<feature type="transmembrane region" description="Helical" evidence="1">
    <location>
        <begin position="118"/>
        <end position="138"/>
    </location>
</feature>
<feature type="transmembrane region" description="Helical" evidence="1">
    <location>
        <begin position="146"/>
        <end position="166"/>
    </location>
</feature>
<feature type="transmembrane region" description="Helical" evidence="1">
    <location>
        <begin position="172"/>
        <end position="192"/>
    </location>
</feature>
<feature type="transmembrane region" description="Helical" evidence="1">
    <location>
        <begin position="217"/>
        <end position="237"/>
    </location>
</feature>
<feature type="transmembrane region" description="Helical" evidence="1">
    <location>
        <begin position="239"/>
        <end position="259"/>
    </location>
</feature>
<feature type="transmembrane region" description="Helical" evidence="1">
    <location>
        <begin position="278"/>
        <end position="298"/>
    </location>
</feature>